<name>PME_RALN1</name>
<sequence length="396" mass="40961">MQSKTLYLKATALLGGCTVFAATALAVTSTATRPQLSSADARTYTIAKYLASFGTIGSLTTDNWDPTGGVGAVSGFRANYAVAADGTAQYKTVQAAIDAAVNAGGVARRYISVKAGIYNELVCVPESAPPITLYGLDANAGNTQIVYNNANPTPASGAKTNPCMGTSSNATVGTLRSATAMVRASDFHARNLTFKNSYVEGTYADNNQSAVALAVRGDKAILENVSVIGNQDTLFVGATSTTTVIRAYFKNSFIQGDTDFIFGAGTAVFHGCTIQYTAARLGAKAASYIFAPSTAPGNPYGFLAINSTFNATGNPPNNSLHLGRAWDQSVSGTSAYINGSSPNGQVVIRDSSLGALIRLADPWGPSTAGRPYCSANCAYSANRFFEYNNTGAGSGN</sequence>
<keyword id="KW-0063">Aspartyl esterase</keyword>
<keyword id="KW-0961">Cell wall biogenesis/degradation</keyword>
<keyword id="KW-0378">Hydrolase</keyword>
<keyword id="KW-0614">Plasmid</keyword>
<keyword id="KW-1185">Reference proteome</keyword>
<keyword id="KW-0964">Secreted</keyword>
<keyword id="KW-0732">Signal</keyword>
<geneLocation type="plasmid">
    <name>megaplasmid Rsp</name>
</geneLocation>
<dbReference type="EC" id="3.1.1.11"/>
<dbReference type="EMBL" id="AL646053">
    <property type="protein sequence ID" value="CAD17289.1"/>
    <property type="status" value="ALT_INIT"/>
    <property type="molecule type" value="Genomic_DNA"/>
</dbReference>
<dbReference type="RefSeq" id="WP_043876793.1">
    <property type="nucleotide sequence ID" value="NC_003296.1"/>
</dbReference>
<dbReference type="SMR" id="P58601"/>
<dbReference type="STRING" id="267608.RSp0138"/>
<dbReference type="EnsemblBacteria" id="CAD17289">
    <property type="protein sequence ID" value="CAD17289"/>
    <property type="gene ID" value="RSp0138"/>
</dbReference>
<dbReference type="KEGG" id="rso:RSp0138"/>
<dbReference type="PATRIC" id="fig|267608.8.peg.3608"/>
<dbReference type="eggNOG" id="COG4677">
    <property type="taxonomic scope" value="Bacteria"/>
</dbReference>
<dbReference type="HOGENOM" id="CLU_012243_5_0_4"/>
<dbReference type="UniPathway" id="UPA00545">
    <property type="reaction ID" value="UER00823"/>
</dbReference>
<dbReference type="Proteomes" id="UP000001436">
    <property type="component" value="Plasmid megaplasmid Rsp"/>
</dbReference>
<dbReference type="GO" id="GO:0009279">
    <property type="term" value="C:cell outer membrane"/>
    <property type="evidence" value="ECO:0007669"/>
    <property type="project" value="TreeGrafter"/>
</dbReference>
<dbReference type="GO" id="GO:0005576">
    <property type="term" value="C:extracellular region"/>
    <property type="evidence" value="ECO:0007669"/>
    <property type="project" value="UniProtKB-SubCell"/>
</dbReference>
<dbReference type="GO" id="GO:0030599">
    <property type="term" value="F:pectinesterase activity"/>
    <property type="evidence" value="ECO:0007669"/>
    <property type="project" value="UniProtKB-EC"/>
</dbReference>
<dbReference type="GO" id="GO:0042545">
    <property type="term" value="P:cell wall modification"/>
    <property type="evidence" value="ECO:0007669"/>
    <property type="project" value="InterPro"/>
</dbReference>
<dbReference type="GO" id="GO:0045490">
    <property type="term" value="P:pectin catabolic process"/>
    <property type="evidence" value="ECO:0007669"/>
    <property type="project" value="UniProtKB-UniPathway"/>
</dbReference>
<dbReference type="Gene3D" id="2.160.20.10">
    <property type="entry name" value="Single-stranded right-handed beta-helix, Pectin lyase-like"/>
    <property type="match status" value="1"/>
</dbReference>
<dbReference type="InterPro" id="IPR012334">
    <property type="entry name" value="Pectin_lyas_fold"/>
</dbReference>
<dbReference type="InterPro" id="IPR011050">
    <property type="entry name" value="Pectin_lyase_fold/virulence"/>
</dbReference>
<dbReference type="InterPro" id="IPR033131">
    <property type="entry name" value="Pectinesterase_Asp_AS"/>
</dbReference>
<dbReference type="InterPro" id="IPR000070">
    <property type="entry name" value="Pectinesterase_cat"/>
</dbReference>
<dbReference type="NCBIfam" id="NF007822">
    <property type="entry name" value="PRK10531.1"/>
    <property type="match status" value="1"/>
</dbReference>
<dbReference type="PANTHER" id="PTHR31321">
    <property type="entry name" value="ACYL-COA THIOESTER HYDROLASE YBHC-RELATED"/>
    <property type="match status" value="1"/>
</dbReference>
<dbReference type="PANTHER" id="PTHR31321:SF57">
    <property type="entry name" value="PECTINESTERASE 53-RELATED"/>
    <property type="match status" value="1"/>
</dbReference>
<dbReference type="Pfam" id="PF01095">
    <property type="entry name" value="Pectinesterase"/>
    <property type="match status" value="1"/>
</dbReference>
<dbReference type="SUPFAM" id="SSF51126">
    <property type="entry name" value="Pectin lyase-like"/>
    <property type="match status" value="1"/>
</dbReference>
<dbReference type="PROSITE" id="PS00503">
    <property type="entry name" value="PECTINESTERASE_2"/>
    <property type="match status" value="1"/>
</dbReference>
<reference key="1">
    <citation type="journal article" date="2002" name="Nature">
        <title>Genome sequence of the plant pathogen Ralstonia solanacearum.</title>
        <authorList>
            <person name="Salanoubat M."/>
            <person name="Genin S."/>
            <person name="Artiguenave F."/>
            <person name="Gouzy J."/>
            <person name="Mangenot S."/>
            <person name="Arlat M."/>
            <person name="Billault A."/>
            <person name="Brottier P."/>
            <person name="Camus J.-C."/>
            <person name="Cattolico L."/>
            <person name="Chandler M."/>
            <person name="Choisne N."/>
            <person name="Claudel-Renard C."/>
            <person name="Cunnac S."/>
            <person name="Demange N."/>
            <person name="Gaspin C."/>
            <person name="Lavie M."/>
            <person name="Moisan A."/>
            <person name="Robert C."/>
            <person name="Saurin W."/>
            <person name="Schiex T."/>
            <person name="Siguier P."/>
            <person name="Thebault P."/>
            <person name="Whalen M."/>
            <person name="Wincker P."/>
            <person name="Levy M."/>
            <person name="Weissenbach J."/>
            <person name="Boucher C.A."/>
        </authorList>
    </citation>
    <scope>NUCLEOTIDE SEQUENCE [LARGE SCALE GENOMIC DNA]</scope>
    <source>
        <strain>ATCC BAA-1114 / GMI1000</strain>
    </source>
</reference>
<comment type="function">
    <text evidence="1">Involved in maceration and soft-rotting of plant tissue.</text>
</comment>
<comment type="catalytic activity">
    <reaction>
        <text>[(1-&gt;4)-alpha-D-galacturonosyl methyl ester](n) + n H2O = [(1-&gt;4)-alpha-D-galacturonosyl](n) + n methanol + n H(+)</text>
        <dbReference type="Rhea" id="RHEA:22380"/>
        <dbReference type="Rhea" id="RHEA-COMP:14570"/>
        <dbReference type="Rhea" id="RHEA-COMP:14573"/>
        <dbReference type="ChEBI" id="CHEBI:15377"/>
        <dbReference type="ChEBI" id="CHEBI:15378"/>
        <dbReference type="ChEBI" id="CHEBI:17790"/>
        <dbReference type="ChEBI" id="CHEBI:140522"/>
        <dbReference type="ChEBI" id="CHEBI:140523"/>
        <dbReference type="EC" id="3.1.1.11"/>
    </reaction>
</comment>
<comment type="pathway">
    <text>Glycan metabolism; pectin degradation; 2-dehydro-3-deoxy-D-gluconate from pectin: step 1/5.</text>
</comment>
<comment type="subcellular location">
    <subcellularLocation>
        <location evidence="1">Secreted</location>
    </subcellularLocation>
</comment>
<comment type="similarity">
    <text evidence="4">Belongs to the pectinesterase family.</text>
</comment>
<comment type="sequence caution" evidence="4">
    <conflict type="erroneous initiation">
        <sequence resource="EMBL-CDS" id="CAD17289"/>
    </conflict>
</comment>
<organism>
    <name type="scientific">Ralstonia nicotianae (strain ATCC BAA-1114 / GMI1000)</name>
    <name type="common">Ralstonia solanacearum</name>
    <dbReference type="NCBI Taxonomy" id="267608"/>
    <lineage>
        <taxon>Bacteria</taxon>
        <taxon>Pseudomonadati</taxon>
        <taxon>Pseudomonadota</taxon>
        <taxon>Betaproteobacteria</taxon>
        <taxon>Burkholderiales</taxon>
        <taxon>Burkholderiaceae</taxon>
        <taxon>Ralstonia</taxon>
        <taxon>Ralstonia solanacearum species complex</taxon>
    </lineage>
</organism>
<evidence type="ECO:0000250" key="1"/>
<evidence type="ECO:0000255" key="2"/>
<evidence type="ECO:0000255" key="3">
    <source>
        <dbReference type="PROSITE-ProRule" id="PRU10040"/>
    </source>
</evidence>
<evidence type="ECO:0000305" key="4"/>
<accession>P58601</accession>
<gene>
    <name type="primary">pme</name>
    <name type="ordered locus">RSp0138</name>
    <name type="ORF">RS02982</name>
</gene>
<proteinExistence type="inferred from homology"/>
<protein>
    <recommendedName>
        <fullName>Pectinesterase</fullName>
        <shortName>PE</shortName>
        <ecNumber>3.1.1.11</ecNumber>
    </recommendedName>
    <alternativeName>
        <fullName>Pectin methylesterase</fullName>
    </alternativeName>
</protein>
<feature type="signal peptide" evidence="2">
    <location>
        <begin position="1"/>
        <end position="21"/>
    </location>
</feature>
<feature type="chain" id="PRO_0000023500" description="Pectinesterase">
    <location>
        <begin position="22"/>
        <end position="396"/>
    </location>
</feature>
<feature type="active site" description="Proton donor" evidence="3">
    <location>
        <position position="232"/>
    </location>
</feature>
<feature type="active site" description="Nucleophile" evidence="3">
    <location>
        <position position="259"/>
    </location>
</feature>
<feature type="binding site" evidence="1">
    <location>
        <position position="174"/>
    </location>
    <ligand>
        <name>substrate</name>
    </ligand>
</feature>
<feature type="binding site" evidence="1">
    <location>
        <position position="324"/>
    </location>
    <ligand>
        <name>substrate</name>
    </ligand>
</feature>
<feature type="binding site" evidence="1">
    <location>
        <position position="326"/>
    </location>
    <ligand>
        <name>substrate</name>
    </ligand>
</feature>
<feature type="site" description="Transition state stabilizer" evidence="1">
    <location>
        <position position="231"/>
    </location>
</feature>